<gene>
    <name evidence="1" type="primary">murG</name>
    <name type="ordered locus">Plut_2110</name>
</gene>
<proteinExistence type="inferred from homology"/>
<organism>
    <name type="scientific">Chlorobium luteolum (strain DSM 273 / BCRC 81028 / 2530)</name>
    <name type="common">Pelodictyon luteolum</name>
    <dbReference type="NCBI Taxonomy" id="319225"/>
    <lineage>
        <taxon>Bacteria</taxon>
        <taxon>Pseudomonadati</taxon>
        <taxon>Chlorobiota</taxon>
        <taxon>Chlorobiia</taxon>
        <taxon>Chlorobiales</taxon>
        <taxon>Chlorobiaceae</taxon>
        <taxon>Chlorobium/Pelodictyon group</taxon>
        <taxon>Pelodictyon</taxon>
    </lineage>
</organism>
<name>MURG_CHLL3</name>
<sequence length="365" mass="38928">MNILFAGGGTGGHLYPAVAMAAMLKEMVPGVELSFAGTASGIEAGEVPRLGYRLHLIPVRGLKRGRSLSALLSNIGVLTDFAASLFRAAALIRRERPDVVVGTGGFVSAPVLLAAQLLGRKTLIQEQNAFPGLTTRLLSILAREVHVAFREATGYLMKKRGVFLTGNPARSFPQRDSSIGREAFGFDPLLPTLLVFGGSRGARAINNAVLRHLGRLTAGSNLIWQTGALDFGRIEKEVSPGRNLWIGAYIEDMGSAYAAADLVLCRAGASSIAELTNLRKPSVLVPYPHATGDHQRHNARALSGPGAALMIEDRELENPEAIEGVIALLHDRERLQMMGAEAGRLSAPEAARILAGRIIDLAEEH</sequence>
<keyword id="KW-0131">Cell cycle</keyword>
<keyword id="KW-0132">Cell division</keyword>
<keyword id="KW-0997">Cell inner membrane</keyword>
<keyword id="KW-1003">Cell membrane</keyword>
<keyword id="KW-0133">Cell shape</keyword>
<keyword id="KW-0961">Cell wall biogenesis/degradation</keyword>
<keyword id="KW-0328">Glycosyltransferase</keyword>
<keyword id="KW-0472">Membrane</keyword>
<keyword id="KW-0573">Peptidoglycan synthesis</keyword>
<keyword id="KW-1185">Reference proteome</keyword>
<keyword id="KW-0808">Transferase</keyword>
<evidence type="ECO:0000255" key="1">
    <source>
        <dbReference type="HAMAP-Rule" id="MF_00033"/>
    </source>
</evidence>
<accession>Q3B129</accession>
<reference key="1">
    <citation type="submission" date="2005-08" db="EMBL/GenBank/DDBJ databases">
        <title>Complete sequence of Pelodictyon luteolum DSM 273.</title>
        <authorList>
            <consortium name="US DOE Joint Genome Institute"/>
            <person name="Copeland A."/>
            <person name="Lucas S."/>
            <person name="Lapidus A."/>
            <person name="Barry K."/>
            <person name="Detter J.C."/>
            <person name="Glavina T."/>
            <person name="Hammon N."/>
            <person name="Israni S."/>
            <person name="Pitluck S."/>
            <person name="Bryant D."/>
            <person name="Schmutz J."/>
            <person name="Larimer F."/>
            <person name="Land M."/>
            <person name="Kyrpides N."/>
            <person name="Ivanova N."/>
            <person name="Richardson P."/>
        </authorList>
    </citation>
    <scope>NUCLEOTIDE SEQUENCE [LARGE SCALE GENOMIC DNA]</scope>
    <source>
        <strain>DSM 273 / BCRC 81028 / 2530</strain>
    </source>
</reference>
<dbReference type="EC" id="2.4.1.227" evidence="1"/>
<dbReference type="EMBL" id="CP000096">
    <property type="protein sequence ID" value="ABB24952.1"/>
    <property type="molecule type" value="Genomic_DNA"/>
</dbReference>
<dbReference type="RefSeq" id="WP_011358822.1">
    <property type="nucleotide sequence ID" value="NC_007512.1"/>
</dbReference>
<dbReference type="SMR" id="Q3B129"/>
<dbReference type="STRING" id="319225.Plut_2110"/>
<dbReference type="CAZy" id="GT28">
    <property type="family name" value="Glycosyltransferase Family 28"/>
</dbReference>
<dbReference type="KEGG" id="plt:Plut_2110"/>
<dbReference type="eggNOG" id="COG0707">
    <property type="taxonomic scope" value="Bacteria"/>
</dbReference>
<dbReference type="HOGENOM" id="CLU_037404_0_1_10"/>
<dbReference type="OrthoDB" id="9808936at2"/>
<dbReference type="UniPathway" id="UPA00219"/>
<dbReference type="Proteomes" id="UP000002709">
    <property type="component" value="Chromosome"/>
</dbReference>
<dbReference type="GO" id="GO:0005886">
    <property type="term" value="C:plasma membrane"/>
    <property type="evidence" value="ECO:0007669"/>
    <property type="project" value="UniProtKB-SubCell"/>
</dbReference>
<dbReference type="GO" id="GO:0051991">
    <property type="term" value="F:UDP-N-acetyl-D-glucosamine:N-acetylmuramoyl-L-alanyl-D-glutamyl-meso-2,6-diaminopimelyl-D-alanyl-D-alanine-diphosphoundecaprenol 4-beta-N-acetylglucosaminlytransferase activity"/>
    <property type="evidence" value="ECO:0007669"/>
    <property type="project" value="RHEA"/>
</dbReference>
<dbReference type="GO" id="GO:0050511">
    <property type="term" value="F:undecaprenyldiphospho-muramoylpentapeptide beta-N-acetylglucosaminyltransferase activity"/>
    <property type="evidence" value="ECO:0007669"/>
    <property type="project" value="UniProtKB-UniRule"/>
</dbReference>
<dbReference type="GO" id="GO:0005975">
    <property type="term" value="P:carbohydrate metabolic process"/>
    <property type="evidence" value="ECO:0007669"/>
    <property type="project" value="InterPro"/>
</dbReference>
<dbReference type="GO" id="GO:0051301">
    <property type="term" value="P:cell division"/>
    <property type="evidence" value="ECO:0007669"/>
    <property type="project" value="UniProtKB-KW"/>
</dbReference>
<dbReference type="GO" id="GO:0071555">
    <property type="term" value="P:cell wall organization"/>
    <property type="evidence" value="ECO:0007669"/>
    <property type="project" value="UniProtKB-KW"/>
</dbReference>
<dbReference type="GO" id="GO:0030259">
    <property type="term" value="P:lipid glycosylation"/>
    <property type="evidence" value="ECO:0007669"/>
    <property type="project" value="UniProtKB-UniRule"/>
</dbReference>
<dbReference type="GO" id="GO:0009252">
    <property type="term" value="P:peptidoglycan biosynthetic process"/>
    <property type="evidence" value="ECO:0007669"/>
    <property type="project" value="UniProtKB-UniRule"/>
</dbReference>
<dbReference type="GO" id="GO:0008360">
    <property type="term" value="P:regulation of cell shape"/>
    <property type="evidence" value="ECO:0007669"/>
    <property type="project" value="UniProtKB-KW"/>
</dbReference>
<dbReference type="CDD" id="cd03785">
    <property type="entry name" value="GT28_MurG"/>
    <property type="match status" value="1"/>
</dbReference>
<dbReference type="Gene3D" id="3.40.50.2000">
    <property type="entry name" value="Glycogen Phosphorylase B"/>
    <property type="match status" value="2"/>
</dbReference>
<dbReference type="HAMAP" id="MF_00033">
    <property type="entry name" value="MurG"/>
    <property type="match status" value="1"/>
</dbReference>
<dbReference type="InterPro" id="IPR006009">
    <property type="entry name" value="GlcNAc_MurG"/>
</dbReference>
<dbReference type="InterPro" id="IPR007235">
    <property type="entry name" value="Glyco_trans_28_C"/>
</dbReference>
<dbReference type="InterPro" id="IPR004276">
    <property type="entry name" value="GlycoTrans_28_N"/>
</dbReference>
<dbReference type="NCBIfam" id="TIGR01133">
    <property type="entry name" value="murG"/>
    <property type="match status" value="1"/>
</dbReference>
<dbReference type="PANTHER" id="PTHR21015:SF22">
    <property type="entry name" value="GLYCOSYLTRANSFERASE"/>
    <property type="match status" value="1"/>
</dbReference>
<dbReference type="PANTHER" id="PTHR21015">
    <property type="entry name" value="UDP-N-ACETYLGLUCOSAMINE--N-ACETYLMURAMYL-(PENTAPEPTIDE) PYROPHOSPHORYL-UNDECAPRENOL N-ACETYLGLUCOSAMINE TRANSFERASE 1"/>
    <property type="match status" value="1"/>
</dbReference>
<dbReference type="Pfam" id="PF04101">
    <property type="entry name" value="Glyco_tran_28_C"/>
    <property type="match status" value="1"/>
</dbReference>
<dbReference type="Pfam" id="PF03033">
    <property type="entry name" value="Glyco_transf_28"/>
    <property type="match status" value="1"/>
</dbReference>
<dbReference type="SUPFAM" id="SSF53756">
    <property type="entry name" value="UDP-Glycosyltransferase/glycogen phosphorylase"/>
    <property type="match status" value="1"/>
</dbReference>
<feature type="chain" id="PRO_1000002677" description="UDP-N-acetylglucosamine--N-acetylmuramyl-(pentapeptide) pyrophosphoryl-undecaprenol N-acetylglucosamine transferase">
    <location>
        <begin position="1"/>
        <end position="365"/>
    </location>
</feature>
<feature type="binding site" evidence="1">
    <location>
        <begin position="10"/>
        <end position="12"/>
    </location>
    <ligand>
        <name>UDP-N-acetyl-alpha-D-glucosamine</name>
        <dbReference type="ChEBI" id="CHEBI:57705"/>
    </ligand>
</feature>
<feature type="binding site" evidence="1">
    <location>
        <position position="128"/>
    </location>
    <ligand>
        <name>UDP-N-acetyl-alpha-D-glucosamine</name>
        <dbReference type="ChEBI" id="CHEBI:57705"/>
    </ligand>
</feature>
<feature type="binding site" evidence="1">
    <location>
        <position position="170"/>
    </location>
    <ligand>
        <name>UDP-N-acetyl-alpha-D-glucosamine</name>
        <dbReference type="ChEBI" id="CHEBI:57705"/>
    </ligand>
</feature>
<feature type="binding site" evidence="1">
    <location>
        <position position="199"/>
    </location>
    <ligand>
        <name>UDP-N-acetyl-alpha-D-glucosamine</name>
        <dbReference type="ChEBI" id="CHEBI:57705"/>
    </ligand>
</feature>
<feature type="binding site" evidence="1">
    <location>
        <position position="250"/>
    </location>
    <ligand>
        <name>UDP-N-acetyl-alpha-D-glucosamine</name>
        <dbReference type="ChEBI" id="CHEBI:57705"/>
    </ligand>
</feature>
<feature type="binding site" evidence="1">
    <location>
        <position position="295"/>
    </location>
    <ligand>
        <name>UDP-N-acetyl-alpha-D-glucosamine</name>
        <dbReference type="ChEBI" id="CHEBI:57705"/>
    </ligand>
</feature>
<protein>
    <recommendedName>
        <fullName evidence="1">UDP-N-acetylglucosamine--N-acetylmuramyl-(pentapeptide) pyrophosphoryl-undecaprenol N-acetylglucosamine transferase</fullName>
        <ecNumber evidence="1">2.4.1.227</ecNumber>
    </recommendedName>
    <alternativeName>
        <fullName evidence="1">Undecaprenyl-PP-MurNAc-pentapeptide-UDPGlcNAc GlcNAc transferase</fullName>
    </alternativeName>
</protein>
<comment type="function">
    <text evidence="1">Cell wall formation. Catalyzes the transfer of a GlcNAc subunit on undecaprenyl-pyrophosphoryl-MurNAc-pentapeptide (lipid intermediate I) to form undecaprenyl-pyrophosphoryl-MurNAc-(pentapeptide)GlcNAc (lipid intermediate II).</text>
</comment>
<comment type="catalytic activity">
    <reaction evidence="1">
        <text>di-trans,octa-cis-undecaprenyl diphospho-N-acetyl-alpha-D-muramoyl-L-alanyl-D-glutamyl-meso-2,6-diaminopimeloyl-D-alanyl-D-alanine + UDP-N-acetyl-alpha-D-glucosamine = di-trans,octa-cis-undecaprenyl diphospho-[N-acetyl-alpha-D-glucosaminyl-(1-&gt;4)]-N-acetyl-alpha-D-muramoyl-L-alanyl-D-glutamyl-meso-2,6-diaminopimeloyl-D-alanyl-D-alanine + UDP + H(+)</text>
        <dbReference type="Rhea" id="RHEA:31227"/>
        <dbReference type="ChEBI" id="CHEBI:15378"/>
        <dbReference type="ChEBI" id="CHEBI:57705"/>
        <dbReference type="ChEBI" id="CHEBI:58223"/>
        <dbReference type="ChEBI" id="CHEBI:61387"/>
        <dbReference type="ChEBI" id="CHEBI:61388"/>
        <dbReference type="EC" id="2.4.1.227"/>
    </reaction>
</comment>
<comment type="pathway">
    <text evidence="1">Cell wall biogenesis; peptidoglycan biosynthesis.</text>
</comment>
<comment type="subcellular location">
    <subcellularLocation>
        <location evidence="1">Cell inner membrane</location>
        <topology evidence="1">Peripheral membrane protein</topology>
        <orientation evidence="1">Cytoplasmic side</orientation>
    </subcellularLocation>
</comment>
<comment type="similarity">
    <text evidence="1">Belongs to the glycosyltransferase 28 family. MurG subfamily.</text>
</comment>